<gene>
    <name type="primary">petA</name>
</gene>
<keyword id="KW-0001">2Fe-2S</keyword>
<keyword id="KW-0002">3D-structure</keyword>
<keyword id="KW-1003">Cell membrane</keyword>
<keyword id="KW-0903">Direct protein sequencing</keyword>
<keyword id="KW-1015">Disulfide bond</keyword>
<keyword id="KW-0249">Electron transport</keyword>
<keyword id="KW-0408">Iron</keyword>
<keyword id="KW-0411">Iron-sulfur</keyword>
<keyword id="KW-0472">Membrane</keyword>
<keyword id="KW-0479">Metal-binding</keyword>
<keyword id="KW-1278">Translocase</keyword>
<keyword id="KW-0812">Transmembrane</keyword>
<keyword id="KW-1133">Transmembrane helix</keyword>
<keyword id="KW-0813">Transport</keyword>
<comment type="function">
    <text>Component of the ubiquinol-cytochrome c reductase complex (complex III or cytochrome b-c1 complex), which is a respiratory chain that generates an electrochemical potential coupled to ATP synthesis.</text>
</comment>
<comment type="catalytic activity">
    <reaction>
        <text>a quinol + 2 Fe(III)-[cytochrome c](out) = a quinone + 2 Fe(II)-[cytochrome c](out) + 2 H(+)(out)</text>
        <dbReference type="Rhea" id="RHEA:11484"/>
        <dbReference type="Rhea" id="RHEA-COMP:10350"/>
        <dbReference type="Rhea" id="RHEA-COMP:14399"/>
        <dbReference type="ChEBI" id="CHEBI:15378"/>
        <dbReference type="ChEBI" id="CHEBI:24646"/>
        <dbReference type="ChEBI" id="CHEBI:29033"/>
        <dbReference type="ChEBI" id="CHEBI:29034"/>
        <dbReference type="ChEBI" id="CHEBI:132124"/>
        <dbReference type="EC" id="7.1.1.8"/>
    </reaction>
</comment>
<comment type="cofactor">
    <cofactor evidence="2">
        <name>[2Fe-2S] cluster</name>
        <dbReference type="ChEBI" id="CHEBI:190135"/>
    </cofactor>
    <text evidence="2">Binds 1 [2Fe-2S] cluster per subunit.</text>
</comment>
<comment type="subunit">
    <text>The main subunits of complex b-c1 are: cytochrome b, cytochrome c1 and the Rieske protein.</text>
</comment>
<comment type="subcellular location">
    <subcellularLocation>
        <location>Cell membrane</location>
        <topology>Single-pass membrane protein</topology>
    </subcellularLocation>
</comment>
<comment type="miscellaneous">
    <text>The Rieske protein is a high potential 2Fe-2S protein.</text>
</comment>
<comment type="similarity">
    <text evidence="3">Belongs to the Rieske iron-sulfur protein family.</text>
</comment>
<organism>
    <name type="scientific">Paracoccus denitrificans</name>
    <dbReference type="NCBI Taxonomy" id="266"/>
    <lineage>
        <taxon>Bacteria</taxon>
        <taxon>Pseudomonadati</taxon>
        <taxon>Pseudomonadota</taxon>
        <taxon>Alphaproteobacteria</taxon>
        <taxon>Rhodobacterales</taxon>
        <taxon>Paracoccaceae</taxon>
        <taxon>Paracoccus</taxon>
    </lineage>
</organism>
<reference key="1">
    <citation type="journal article" date="1987" name="J. Biol. Chem.">
        <title>The genes of the Paracoccus denitrificans bc1 complex. Nucleotide sequence and homologies between bacterial and mitochondrial subunits.</title>
        <authorList>
            <person name="Kurowski B."/>
            <person name="Ludwig B."/>
        </authorList>
    </citation>
    <scope>NUCLEOTIDE SEQUENCE [GENOMIC DNA]</scope>
</reference>
<reference key="2">
    <citation type="journal article" date="1995" name="Eur. J. Biochem.">
        <title>Immunoelectron microscopy and epitope mapping with monoclonal antibodies suggest the existence of an additional N-terminal transmembrane helix in the cytochrome b subunit of bacterial ubiquinol:cytochrome-c oxidoreductases.</title>
        <authorList>
            <person name="Kleymann G."/>
            <person name="Iwata S."/>
            <person name="Wiesmueller K.-H."/>
            <person name="Ludwig B."/>
            <person name="Haase W."/>
            <person name="Michel H."/>
        </authorList>
    </citation>
    <scope>PROTEIN SEQUENCE OF 17-23 AND 37-60</scope>
</reference>
<dbReference type="EC" id="7.1.1.8"/>
<dbReference type="EMBL" id="M17522">
    <property type="protein sequence ID" value="AAA25571.1"/>
    <property type="molecule type" value="Genomic_DNA"/>
</dbReference>
<dbReference type="EMBL" id="X05799">
    <property type="protein sequence ID" value="CAA29243.1"/>
    <property type="molecule type" value="Genomic_DNA"/>
</dbReference>
<dbReference type="PIR" id="A29413">
    <property type="entry name" value="A29413"/>
</dbReference>
<dbReference type="RefSeq" id="WP_074810391.1">
    <property type="nucleotide sequence ID" value="NZ_JAOSHR010000005.1"/>
</dbReference>
<dbReference type="PDB" id="2YIU">
    <property type="method" value="X-ray"/>
    <property type="resolution" value="2.70 A"/>
    <property type="chains" value="C/F=1-190"/>
</dbReference>
<dbReference type="PDBsum" id="2YIU"/>
<dbReference type="SMR" id="P05417"/>
<dbReference type="TCDB" id="3.D.3.1.1">
    <property type="family name" value="the proton-translocating quinol:cytochrome c reductase (qcr) superfamily"/>
</dbReference>
<dbReference type="GeneID" id="93450701"/>
<dbReference type="EvolutionaryTrace" id="P05417"/>
<dbReference type="GO" id="GO:0005886">
    <property type="term" value="C:plasma membrane"/>
    <property type="evidence" value="ECO:0007669"/>
    <property type="project" value="UniProtKB-SubCell"/>
</dbReference>
<dbReference type="GO" id="GO:0051537">
    <property type="term" value="F:2 iron, 2 sulfur cluster binding"/>
    <property type="evidence" value="ECO:0007669"/>
    <property type="project" value="UniProtKB-KW"/>
</dbReference>
<dbReference type="GO" id="GO:0046872">
    <property type="term" value="F:metal ion binding"/>
    <property type="evidence" value="ECO:0007669"/>
    <property type="project" value="UniProtKB-KW"/>
</dbReference>
<dbReference type="GO" id="GO:0008121">
    <property type="term" value="F:ubiquinol-cytochrome-c reductase activity"/>
    <property type="evidence" value="ECO:0007669"/>
    <property type="project" value="UniProtKB-EC"/>
</dbReference>
<dbReference type="CDD" id="cd03470">
    <property type="entry name" value="Rieske_cytochrome_bc1"/>
    <property type="match status" value="1"/>
</dbReference>
<dbReference type="FunFam" id="2.102.10.10:FF:000001">
    <property type="entry name" value="Cytochrome b-c1 complex subunit Rieske, mitochondrial"/>
    <property type="match status" value="1"/>
</dbReference>
<dbReference type="Gene3D" id="2.102.10.10">
    <property type="entry name" value="Rieske [2Fe-2S] iron-sulphur domain"/>
    <property type="match status" value="1"/>
</dbReference>
<dbReference type="Gene3D" id="1.20.5.510">
    <property type="entry name" value="Single helix bin"/>
    <property type="match status" value="1"/>
</dbReference>
<dbReference type="InterPro" id="IPR017941">
    <property type="entry name" value="Rieske_2Fe-2S"/>
</dbReference>
<dbReference type="InterPro" id="IPR036922">
    <property type="entry name" value="Rieske_2Fe-2S_sf"/>
</dbReference>
<dbReference type="InterPro" id="IPR014349">
    <property type="entry name" value="Rieske_Fe-S_prot"/>
</dbReference>
<dbReference type="InterPro" id="IPR005805">
    <property type="entry name" value="Rieske_Fe-S_prot_C"/>
</dbReference>
<dbReference type="InterPro" id="IPR006311">
    <property type="entry name" value="TAT_signal"/>
</dbReference>
<dbReference type="InterPro" id="IPR019546">
    <property type="entry name" value="TAT_signal_bac_arc"/>
</dbReference>
<dbReference type="InterPro" id="IPR019470">
    <property type="entry name" value="Ubiq_cytC_Rdtase_Fe-S_su_TAT"/>
</dbReference>
<dbReference type="InterPro" id="IPR006317">
    <property type="entry name" value="Ubiquinol_cyt_c_Rdtase_Fe-S-su"/>
</dbReference>
<dbReference type="NCBIfam" id="TIGR01416">
    <property type="entry name" value="Rieske_proteo"/>
    <property type="match status" value="1"/>
</dbReference>
<dbReference type="NCBIfam" id="TIGR01409">
    <property type="entry name" value="TAT_signal_seq"/>
    <property type="match status" value="1"/>
</dbReference>
<dbReference type="PANTHER" id="PTHR10134">
    <property type="entry name" value="CYTOCHROME B-C1 COMPLEX SUBUNIT RIESKE, MITOCHONDRIAL"/>
    <property type="match status" value="1"/>
</dbReference>
<dbReference type="Pfam" id="PF00355">
    <property type="entry name" value="Rieske"/>
    <property type="match status" value="1"/>
</dbReference>
<dbReference type="Pfam" id="PF10399">
    <property type="entry name" value="UCR_Fe-S_N"/>
    <property type="match status" value="1"/>
</dbReference>
<dbReference type="PRINTS" id="PR00162">
    <property type="entry name" value="RIESKE"/>
</dbReference>
<dbReference type="SUPFAM" id="SSF50022">
    <property type="entry name" value="ISP domain"/>
    <property type="match status" value="1"/>
</dbReference>
<dbReference type="PROSITE" id="PS51296">
    <property type="entry name" value="RIESKE"/>
    <property type="match status" value="1"/>
</dbReference>
<dbReference type="PROSITE" id="PS51318">
    <property type="entry name" value="TAT"/>
    <property type="match status" value="1"/>
</dbReference>
<sequence length="190" mass="20300">MSHADEHAGDHGATRRDFLYYATAGAGTVAAGAAAWTLVNQMNPSADVQALASIQVDVSGVETGTQLTVKWLGKPVFIRRRTEDEIQAGREVDLGQLIDRSAQNSNKPDAPATDENRTMDEAGEWLVMIGVCTHLGCVPIGDGAGDFGGWFCPCHGSHYDTSGRIRRGPAPQNLHIPVAEFLDDTTIKLG</sequence>
<evidence type="ECO:0000255" key="1"/>
<evidence type="ECO:0000255" key="2">
    <source>
        <dbReference type="PROSITE-ProRule" id="PRU00628"/>
    </source>
</evidence>
<evidence type="ECO:0000305" key="3"/>
<evidence type="ECO:0007829" key="4">
    <source>
        <dbReference type="PDB" id="2YIU"/>
    </source>
</evidence>
<name>UCRI_PARDE</name>
<accession>P05417</accession>
<protein>
    <recommendedName>
        <fullName>Ubiquinol-cytochrome c reductase iron-sulfur subunit</fullName>
        <ecNumber>7.1.1.8</ecNumber>
    </recommendedName>
    <alternativeName>
        <fullName>Rieske iron-sulfur protein</fullName>
        <shortName>RISP</shortName>
    </alternativeName>
</protein>
<proteinExistence type="evidence at protein level"/>
<feature type="chain" id="PRO_0000127761" description="Ubiquinol-cytochrome c reductase iron-sulfur subunit">
    <location>
        <begin position="1"/>
        <end position="190"/>
    </location>
</feature>
<feature type="transmembrane region" description="Helical" evidence="1">
    <location>
        <begin position="18"/>
        <end position="39"/>
    </location>
</feature>
<feature type="domain" description="Rieske" evidence="2">
    <location>
        <begin position="95"/>
        <end position="188"/>
    </location>
</feature>
<feature type="binding site" evidence="2">
    <location>
        <position position="132"/>
    </location>
    <ligand>
        <name>[2Fe-2S] cluster</name>
        <dbReference type="ChEBI" id="CHEBI:190135"/>
    </ligand>
</feature>
<feature type="binding site" evidence="2">
    <location>
        <position position="134"/>
    </location>
    <ligand>
        <name>[2Fe-2S] cluster</name>
        <dbReference type="ChEBI" id="CHEBI:190135"/>
    </ligand>
</feature>
<feature type="binding site" evidence="2">
    <location>
        <position position="152"/>
    </location>
    <ligand>
        <name>[2Fe-2S] cluster</name>
        <dbReference type="ChEBI" id="CHEBI:190135"/>
    </ligand>
</feature>
<feature type="binding site" evidence="2">
    <location>
        <position position="155"/>
    </location>
    <ligand>
        <name>[2Fe-2S] cluster</name>
        <dbReference type="ChEBI" id="CHEBI:190135"/>
    </ligand>
</feature>
<feature type="disulfide bond" evidence="2">
    <location>
        <begin position="137"/>
        <end position="154"/>
    </location>
</feature>
<feature type="helix" evidence="4">
    <location>
        <begin position="19"/>
        <end position="40"/>
    </location>
</feature>
<feature type="helix" evidence="4">
    <location>
        <begin position="46"/>
        <end position="48"/>
    </location>
</feature>
<feature type="strand" evidence="4">
    <location>
        <begin position="54"/>
        <end position="57"/>
    </location>
</feature>
<feature type="strand" evidence="4">
    <location>
        <begin position="65"/>
        <end position="71"/>
    </location>
</feature>
<feature type="strand" evidence="4">
    <location>
        <begin position="74"/>
        <end position="80"/>
    </location>
</feature>
<feature type="helix" evidence="4">
    <location>
        <begin position="83"/>
        <end position="91"/>
    </location>
</feature>
<feature type="helix" evidence="4">
    <location>
        <begin position="94"/>
        <end position="96"/>
    </location>
</feature>
<feature type="turn" evidence="4">
    <location>
        <begin position="115"/>
        <end position="117"/>
    </location>
</feature>
<feature type="strand" evidence="4">
    <location>
        <begin position="118"/>
        <end position="120"/>
    </location>
</feature>
<feature type="strand" evidence="4">
    <location>
        <begin position="125"/>
        <end position="129"/>
    </location>
</feature>
<feature type="turn" evidence="4">
    <location>
        <begin position="133"/>
        <end position="135"/>
    </location>
</feature>
<feature type="strand" evidence="4">
    <location>
        <begin position="148"/>
        <end position="152"/>
    </location>
</feature>
<feature type="turn" evidence="4">
    <location>
        <begin position="153"/>
        <end position="156"/>
    </location>
</feature>
<feature type="strand" evidence="4">
    <location>
        <begin position="157"/>
        <end position="159"/>
    </location>
</feature>
<feature type="strand" evidence="4">
    <location>
        <begin position="165"/>
        <end position="169"/>
    </location>
</feature>
<feature type="strand" evidence="4">
    <location>
        <begin position="178"/>
        <end position="183"/>
    </location>
</feature>
<feature type="strand" evidence="4">
    <location>
        <begin position="186"/>
        <end position="189"/>
    </location>
</feature>